<organism>
    <name type="scientific">Pseudomonas syringae pv. syringae (strain B728a)</name>
    <dbReference type="NCBI Taxonomy" id="205918"/>
    <lineage>
        <taxon>Bacteria</taxon>
        <taxon>Pseudomonadati</taxon>
        <taxon>Pseudomonadota</taxon>
        <taxon>Gammaproteobacteria</taxon>
        <taxon>Pseudomonadales</taxon>
        <taxon>Pseudomonadaceae</taxon>
        <taxon>Pseudomonas</taxon>
        <taxon>Pseudomonas syringae</taxon>
    </lineage>
</organism>
<sequence length="156" mass="16941">MNINATLIGQSVAFFIFVLFCMKFVWPPVIAALHERQKKIADGLDAASRAARDLELAQEKAGQQLREAKAQAAEIIEQAKKRGTQIVDEARETARVEADRVKAQAQAEIEQELNGVKDALRAQLGSLAVNGAEKILGATIDQNAHAELVNKLAAEI</sequence>
<protein>
    <recommendedName>
        <fullName evidence="1">ATP synthase subunit b</fullName>
    </recommendedName>
    <alternativeName>
        <fullName evidence="1">ATP synthase F(0) sector subunit b</fullName>
    </alternativeName>
    <alternativeName>
        <fullName evidence="1">ATPase subunit I</fullName>
    </alternativeName>
    <alternativeName>
        <fullName evidence="1">F-type ATPase subunit b</fullName>
        <shortName evidence="1">F-ATPase subunit b</shortName>
    </alternativeName>
</protein>
<accession>Q4ZL20</accession>
<dbReference type="EMBL" id="CP000075">
    <property type="protein sequence ID" value="AAY40152.1"/>
    <property type="molecule type" value="Genomic_DNA"/>
</dbReference>
<dbReference type="RefSeq" id="WP_003401414.1">
    <property type="nucleotide sequence ID" value="NC_007005.1"/>
</dbReference>
<dbReference type="RefSeq" id="YP_238190.1">
    <property type="nucleotide sequence ID" value="NC_007005.1"/>
</dbReference>
<dbReference type="SMR" id="Q4ZL20"/>
<dbReference type="STRING" id="205918.Psyr_5125"/>
<dbReference type="KEGG" id="psb:Psyr_5125"/>
<dbReference type="PATRIC" id="fig|205918.7.peg.5286"/>
<dbReference type="eggNOG" id="COG0711">
    <property type="taxonomic scope" value="Bacteria"/>
</dbReference>
<dbReference type="HOGENOM" id="CLU_079215_4_5_6"/>
<dbReference type="OrthoDB" id="9788020at2"/>
<dbReference type="Proteomes" id="UP000000426">
    <property type="component" value="Chromosome"/>
</dbReference>
<dbReference type="GO" id="GO:0005886">
    <property type="term" value="C:plasma membrane"/>
    <property type="evidence" value="ECO:0007669"/>
    <property type="project" value="UniProtKB-SubCell"/>
</dbReference>
<dbReference type="GO" id="GO:0045259">
    <property type="term" value="C:proton-transporting ATP synthase complex"/>
    <property type="evidence" value="ECO:0007669"/>
    <property type="project" value="UniProtKB-KW"/>
</dbReference>
<dbReference type="GO" id="GO:0046933">
    <property type="term" value="F:proton-transporting ATP synthase activity, rotational mechanism"/>
    <property type="evidence" value="ECO:0007669"/>
    <property type="project" value="UniProtKB-UniRule"/>
</dbReference>
<dbReference type="GO" id="GO:0046961">
    <property type="term" value="F:proton-transporting ATPase activity, rotational mechanism"/>
    <property type="evidence" value="ECO:0007669"/>
    <property type="project" value="TreeGrafter"/>
</dbReference>
<dbReference type="CDD" id="cd06503">
    <property type="entry name" value="ATP-synt_Fo_b"/>
    <property type="match status" value="1"/>
</dbReference>
<dbReference type="FunFam" id="1.20.5.620:FF:000001">
    <property type="entry name" value="ATP synthase subunit b"/>
    <property type="match status" value="1"/>
</dbReference>
<dbReference type="Gene3D" id="1.20.5.620">
    <property type="entry name" value="F1F0 ATP synthase subunit B, membrane domain"/>
    <property type="match status" value="1"/>
</dbReference>
<dbReference type="HAMAP" id="MF_01398">
    <property type="entry name" value="ATP_synth_b_bprime"/>
    <property type="match status" value="1"/>
</dbReference>
<dbReference type="InterPro" id="IPR028987">
    <property type="entry name" value="ATP_synth_B-like_membr_sf"/>
</dbReference>
<dbReference type="InterPro" id="IPR002146">
    <property type="entry name" value="ATP_synth_b/b'su_bac/chlpt"/>
</dbReference>
<dbReference type="InterPro" id="IPR005864">
    <property type="entry name" value="ATP_synth_F0_bsu_bac"/>
</dbReference>
<dbReference type="InterPro" id="IPR050059">
    <property type="entry name" value="ATP_synthase_B_chain"/>
</dbReference>
<dbReference type="NCBIfam" id="TIGR01144">
    <property type="entry name" value="ATP_synt_b"/>
    <property type="match status" value="1"/>
</dbReference>
<dbReference type="NCBIfam" id="NF004411">
    <property type="entry name" value="PRK05759.1-2"/>
    <property type="match status" value="1"/>
</dbReference>
<dbReference type="NCBIfam" id="NF004413">
    <property type="entry name" value="PRK05759.1-4"/>
    <property type="match status" value="1"/>
</dbReference>
<dbReference type="PANTHER" id="PTHR33445:SF1">
    <property type="entry name" value="ATP SYNTHASE SUBUNIT B"/>
    <property type="match status" value="1"/>
</dbReference>
<dbReference type="PANTHER" id="PTHR33445">
    <property type="entry name" value="ATP SYNTHASE SUBUNIT B', CHLOROPLASTIC"/>
    <property type="match status" value="1"/>
</dbReference>
<dbReference type="Pfam" id="PF00430">
    <property type="entry name" value="ATP-synt_B"/>
    <property type="match status" value="1"/>
</dbReference>
<dbReference type="SUPFAM" id="SSF81573">
    <property type="entry name" value="F1F0 ATP synthase subunit B, membrane domain"/>
    <property type="match status" value="1"/>
</dbReference>
<evidence type="ECO:0000255" key="1">
    <source>
        <dbReference type="HAMAP-Rule" id="MF_01398"/>
    </source>
</evidence>
<gene>
    <name evidence="1" type="primary">atpF</name>
    <name type="ordered locus">Psyr_5125</name>
</gene>
<feature type="chain" id="PRO_0000368695" description="ATP synthase subunit b">
    <location>
        <begin position="1"/>
        <end position="156"/>
    </location>
</feature>
<feature type="transmembrane region" description="Helical" evidence="1">
    <location>
        <begin position="12"/>
        <end position="32"/>
    </location>
</feature>
<comment type="function">
    <text evidence="1">F(1)F(0) ATP synthase produces ATP from ADP in the presence of a proton or sodium gradient. F-type ATPases consist of two structural domains, F(1) containing the extramembraneous catalytic core and F(0) containing the membrane proton channel, linked together by a central stalk and a peripheral stalk. During catalysis, ATP synthesis in the catalytic domain of F(1) is coupled via a rotary mechanism of the central stalk subunits to proton translocation.</text>
</comment>
<comment type="function">
    <text evidence="1">Component of the F(0) channel, it forms part of the peripheral stalk, linking F(1) to F(0).</text>
</comment>
<comment type="subunit">
    <text evidence="1">F-type ATPases have 2 components, F(1) - the catalytic core - and F(0) - the membrane proton channel. F(1) has five subunits: alpha(3), beta(3), gamma(1), delta(1), epsilon(1). F(0) has three main subunits: a(1), b(2) and c(10-14). The alpha and beta chains form an alternating ring which encloses part of the gamma chain. F(1) is attached to F(0) by a central stalk formed by the gamma and epsilon chains, while a peripheral stalk is formed by the delta and b chains.</text>
</comment>
<comment type="subcellular location">
    <subcellularLocation>
        <location evidence="1">Cell inner membrane</location>
        <topology evidence="1">Single-pass membrane protein</topology>
    </subcellularLocation>
</comment>
<comment type="similarity">
    <text evidence="1">Belongs to the ATPase B chain family.</text>
</comment>
<proteinExistence type="inferred from homology"/>
<name>ATPF_PSEU2</name>
<reference key="1">
    <citation type="journal article" date="2005" name="Proc. Natl. Acad. Sci. U.S.A.">
        <title>Comparison of the complete genome sequences of Pseudomonas syringae pv. syringae B728a and pv. tomato DC3000.</title>
        <authorList>
            <person name="Feil H."/>
            <person name="Feil W.S."/>
            <person name="Chain P."/>
            <person name="Larimer F."/>
            <person name="Dibartolo G."/>
            <person name="Copeland A."/>
            <person name="Lykidis A."/>
            <person name="Trong S."/>
            <person name="Nolan M."/>
            <person name="Goltsman E."/>
            <person name="Thiel J."/>
            <person name="Malfatti S."/>
            <person name="Loper J.E."/>
            <person name="Lapidus A."/>
            <person name="Detter J.C."/>
            <person name="Land M."/>
            <person name="Richardson P.M."/>
            <person name="Kyrpides N.C."/>
            <person name="Ivanova N."/>
            <person name="Lindow S.E."/>
        </authorList>
    </citation>
    <scope>NUCLEOTIDE SEQUENCE [LARGE SCALE GENOMIC DNA]</scope>
    <source>
        <strain>B728a</strain>
    </source>
</reference>
<keyword id="KW-0066">ATP synthesis</keyword>
<keyword id="KW-0997">Cell inner membrane</keyword>
<keyword id="KW-1003">Cell membrane</keyword>
<keyword id="KW-0138">CF(0)</keyword>
<keyword id="KW-0375">Hydrogen ion transport</keyword>
<keyword id="KW-0406">Ion transport</keyword>
<keyword id="KW-0472">Membrane</keyword>
<keyword id="KW-0812">Transmembrane</keyword>
<keyword id="KW-1133">Transmembrane helix</keyword>
<keyword id="KW-0813">Transport</keyword>